<accession>Q8L3B9</accession>
<comment type="function">
    <text evidence="1">Involved in the degradation of chitin. ChbG is essential for growth on the acetylated chitooligosaccharides chitobiose and chitotriose but is dispensable for growth on cellobiose and chitosan dimer, the deacetylated form of chitobiose. Deacetylation of chitobiose-6-P and chitotriose-6-P is necessary for both the activation of the chb promoter by the regulatory protein ChbR and the hydrolysis of phosphorylated beta-glucosides by the phospho-beta-glucosidase ChbF. Catalyzes the removal of only one acetyl group from chitobiose-6-P to yield monoacetylchitobiose-6-P, the inducer of ChbR and the substrate of ChbF.</text>
</comment>
<comment type="catalytic activity">
    <reaction evidence="1">
        <text>N,N'-diacetylchitobiose + H2O = N-acetyl-beta-D-glucosaminyl-(1-&gt;4)-D-glucosamine + acetate</text>
        <dbReference type="Rhea" id="RHEA:27469"/>
        <dbReference type="ChEBI" id="CHEBI:15377"/>
        <dbReference type="ChEBI" id="CHEBI:28681"/>
        <dbReference type="ChEBI" id="CHEBI:30089"/>
        <dbReference type="ChEBI" id="CHEBI:59910"/>
        <dbReference type="EC" id="3.5.1.105"/>
    </reaction>
</comment>
<comment type="catalytic activity">
    <reaction evidence="1">
        <text>diacetylchitobiose-6'-phosphate + H2O = N'-monoacetylchitobiose-6'-phosphate + acetate</text>
        <dbReference type="Rhea" id="RHEA:35083"/>
        <dbReference type="ChEBI" id="CHEBI:15377"/>
        <dbReference type="ChEBI" id="CHEBI:30089"/>
        <dbReference type="ChEBI" id="CHEBI:64883"/>
        <dbReference type="ChEBI" id="CHEBI:71315"/>
    </reaction>
</comment>
<comment type="cofactor">
    <cofactor evidence="1">
        <name>Mg(2+)</name>
        <dbReference type="ChEBI" id="CHEBI:18420"/>
    </cofactor>
</comment>
<comment type="pathway">
    <text evidence="1">Glycan degradation; chitin degradation.</text>
</comment>
<comment type="subunit">
    <text evidence="1">Homodimer.</text>
</comment>
<comment type="subcellular location">
    <subcellularLocation>
        <location evidence="1">Cytoplasm</location>
    </subcellularLocation>
</comment>
<comment type="similarity">
    <text evidence="1">Belongs to the YdjC deacetylase family. ChbG subfamily.</text>
</comment>
<comment type="sequence caution" evidence="2">
    <conflict type="erroneous initiation">
        <sequence resource="EMBL-CDS" id="BAB92994"/>
    </conflict>
    <text>Extended N-terminus.</text>
</comment>
<protein>
    <recommendedName>
        <fullName evidence="1">Chitooligosaccharide deacetylase</fullName>
        <shortName evidence="1">COD</shortName>
        <ecNumber evidence="1">3.5.1.105</ecNumber>
    </recommendedName>
    <alternativeName>
        <fullName evidence="1">Chitin disaccharide deacetylase</fullName>
    </alternativeName>
    <alternativeName>
        <fullName evidence="1">Chitobiose deacetylase</fullName>
    </alternativeName>
    <alternativeName>
        <fullName evidence="1">Chitobiose-6P deacetylase</fullName>
    </alternativeName>
    <alternativeName>
        <fullName evidence="1">Chitotriose deacetylase</fullName>
    </alternativeName>
    <alternativeName>
        <fullName evidence="1">Chitotriose-6P deacetylase</fullName>
    </alternativeName>
</protein>
<organism>
    <name type="scientific">Serratia marcescens</name>
    <dbReference type="NCBI Taxonomy" id="615"/>
    <lineage>
        <taxon>Bacteria</taxon>
        <taxon>Pseudomonadati</taxon>
        <taxon>Pseudomonadota</taxon>
        <taxon>Gammaproteobacteria</taxon>
        <taxon>Enterobacterales</taxon>
        <taxon>Yersiniaceae</taxon>
        <taxon>Serratia</taxon>
    </lineage>
</organism>
<reference key="1">
    <citation type="journal article" date="2003" name="J. Bacteriol.">
        <title>Uptake of N,N'-diacetylchitobiose [(GlcNAc)2] via the phosphotransferase system is essential for chitinase production by Serratia marcescens 2170.</title>
        <authorList>
            <person name="Uchiyama T."/>
            <person name="Kaneko R."/>
            <person name="Yamaguchi J."/>
            <person name="Inoue A."/>
            <person name="Yanagida T."/>
            <person name="Nikaidou N."/>
            <person name="Regue M."/>
            <person name="Watanabe T."/>
        </authorList>
    </citation>
    <scope>NUCLEOTIDE SEQUENCE [GENOMIC DNA]</scope>
    <source>
        <strain>2170</strain>
    </source>
</reference>
<sequence length="253" mass="28019">MEKLLIVNADDFGLSKGQNYGVIEAYQHGVVSSTTAMVNGGGAQHAAALSRQYPGLPIGLHFVLTHGKPLGAMPSLVNEHGELGKWLWRRAEAGELSLDEIHEELQRQFARFVTLFGRPPTHIDSHHHVHMQPQIYPLVEAFAQAQGLPLRLDREEAKRRELALQTPCSTDAFDAGFYGEMISEALFLQRLARADEQGAESLEMMCHPAFLDATILQSKYCHPRLVELDVLTAPTLKAAIAERGFLLGSFQDL</sequence>
<gene>
    <name evidence="1" type="primary">chbG</name>
</gene>
<dbReference type="EC" id="3.5.1.105" evidence="1"/>
<dbReference type="EMBL" id="AB085625">
    <property type="protein sequence ID" value="BAB92994.1"/>
    <property type="status" value="ALT_INIT"/>
    <property type="molecule type" value="Genomic_DNA"/>
</dbReference>
<dbReference type="RefSeq" id="WP_079451055.1">
    <property type="nucleotide sequence ID" value="NZ_CAHPRS010000003.1"/>
</dbReference>
<dbReference type="SMR" id="Q8L3B9"/>
<dbReference type="STRING" id="273526.SMDB11_0155"/>
<dbReference type="UniPathway" id="UPA00349"/>
<dbReference type="GO" id="GO:0005737">
    <property type="term" value="C:cytoplasm"/>
    <property type="evidence" value="ECO:0007669"/>
    <property type="project" value="UniProtKB-SubCell"/>
</dbReference>
<dbReference type="GO" id="GO:0036311">
    <property type="term" value="F:chitin disaccharide deacetylase activity"/>
    <property type="evidence" value="ECO:0007669"/>
    <property type="project" value="UniProtKB-UniRule"/>
</dbReference>
<dbReference type="GO" id="GO:0019213">
    <property type="term" value="F:deacetylase activity"/>
    <property type="evidence" value="ECO:0007669"/>
    <property type="project" value="TreeGrafter"/>
</dbReference>
<dbReference type="GO" id="GO:0046872">
    <property type="term" value="F:metal ion binding"/>
    <property type="evidence" value="ECO:0007669"/>
    <property type="project" value="UniProtKB-KW"/>
</dbReference>
<dbReference type="GO" id="GO:0006032">
    <property type="term" value="P:chitin catabolic process"/>
    <property type="evidence" value="ECO:0007669"/>
    <property type="project" value="UniProtKB-UniPathway"/>
</dbReference>
<dbReference type="GO" id="GO:0052777">
    <property type="term" value="P:diacetylchitobiose catabolic process"/>
    <property type="evidence" value="ECO:0007669"/>
    <property type="project" value="UniProtKB-UniRule"/>
</dbReference>
<dbReference type="GO" id="GO:0000272">
    <property type="term" value="P:polysaccharide catabolic process"/>
    <property type="evidence" value="ECO:0007669"/>
    <property type="project" value="UniProtKB-UniRule"/>
</dbReference>
<dbReference type="CDD" id="cd10803">
    <property type="entry name" value="YdjC_EF3048_like"/>
    <property type="match status" value="1"/>
</dbReference>
<dbReference type="Gene3D" id="3.20.20.370">
    <property type="entry name" value="Glycoside hydrolase/deacetylase"/>
    <property type="match status" value="1"/>
</dbReference>
<dbReference type="HAMAP" id="MF_01246">
    <property type="entry name" value="COD"/>
    <property type="match status" value="1"/>
</dbReference>
<dbReference type="InterPro" id="IPR022948">
    <property type="entry name" value="COD_ChbG_bac"/>
</dbReference>
<dbReference type="InterPro" id="IPR011330">
    <property type="entry name" value="Glyco_hydro/deAcase_b/a-brl"/>
</dbReference>
<dbReference type="InterPro" id="IPR006879">
    <property type="entry name" value="YdjC-like"/>
</dbReference>
<dbReference type="NCBIfam" id="NF002559">
    <property type="entry name" value="PRK02134.1"/>
    <property type="match status" value="1"/>
</dbReference>
<dbReference type="PANTHER" id="PTHR31609:SF1">
    <property type="entry name" value="CARBOHYDRATE DEACETYLASE"/>
    <property type="match status" value="1"/>
</dbReference>
<dbReference type="PANTHER" id="PTHR31609">
    <property type="entry name" value="YDJC DEACETYLASE FAMILY MEMBER"/>
    <property type="match status" value="1"/>
</dbReference>
<dbReference type="Pfam" id="PF04794">
    <property type="entry name" value="YdjC"/>
    <property type="match status" value="1"/>
</dbReference>
<dbReference type="SUPFAM" id="SSF88713">
    <property type="entry name" value="Glycoside hydrolase/deacetylase"/>
    <property type="match status" value="1"/>
</dbReference>
<feature type="chain" id="PRO_0000051600" description="Chitooligosaccharide deacetylase">
    <location>
        <begin position="1"/>
        <end position="253"/>
    </location>
</feature>
<feature type="binding site" evidence="1">
    <location>
        <position position="61"/>
    </location>
    <ligand>
        <name>Mg(2+)</name>
        <dbReference type="ChEBI" id="CHEBI:18420"/>
    </ligand>
</feature>
<feature type="binding site" evidence="1">
    <location>
        <position position="126"/>
    </location>
    <ligand>
        <name>Mg(2+)</name>
        <dbReference type="ChEBI" id="CHEBI:18420"/>
    </ligand>
</feature>
<name>CHBG_SERMA</name>
<proteinExistence type="inferred from homology"/>
<evidence type="ECO:0000255" key="1">
    <source>
        <dbReference type="HAMAP-Rule" id="MF_01246"/>
    </source>
</evidence>
<evidence type="ECO:0000305" key="2"/>
<keyword id="KW-0119">Carbohydrate metabolism</keyword>
<keyword id="KW-0146">Chitin degradation</keyword>
<keyword id="KW-0963">Cytoplasm</keyword>
<keyword id="KW-0378">Hydrolase</keyword>
<keyword id="KW-0460">Magnesium</keyword>
<keyword id="KW-0479">Metal-binding</keyword>
<keyword id="KW-0624">Polysaccharide degradation</keyword>